<gene>
    <name type="primary">norM</name>
    <name type="ordered locus">XF_2686</name>
</gene>
<name>NORM_XYLFA</name>
<feature type="chain" id="PRO_0000164251" description="Probable multidrug resistance protein NorM">
    <location>
        <begin position="1"/>
        <end position="469"/>
    </location>
</feature>
<feature type="transmembrane region" description="Helical" evidence="2">
    <location>
        <begin position="10"/>
        <end position="30"/>
    </location>
</feature>
<feature type="transmembrane region" description="Helical" evidence="2">
    <location>
        <begin position="34"/>
        <end position="54"/>
    </location>
</feature>
<feature type="transmembrane region" description="Helical" evidence="2">
    <location>
        <begin position="74"/>
        <end position="94"/>
    </location>
</feature>
<feature type="transmembrane region" description="Helical" evidence="2">
    <location>
        <begin position="121"/>
        <end position="141"/>
    </location>
</feature>
<feature type="transmembrane region" description="Helical" evidence="2">
    <location>
        <begin position="179"/>
        <end position="199"/>
    </location>
</feature>
<feature type="transmembrane region" description="Helical" evidence="2">
    <location>
        <begin position="214"/>
        <end position="234"/>
    </location>
</feature>
<feature type="transmembrane region" description="Helical" evidence="2">
    <location>
        <begin position="264"/>
        <end position="284"/>
    </location>
</feature>
<feature type="transmembrane region" description="Helical" evidence="2">
    <location>
        <begin position="292"/>
        <end position="312"/>
    </location>
</feature>
<feature type="transmembrane region" description="Helical" evidence="2">
    <location>
        <begin position="335"/>
        <end position="355"/>
    </location>
</feature>
<feature type="transmembrane region" description="Helical" evidence="2">
    <location>
        <begin position="369"/>
        <end position="389"/>
    </location>
</feature>
<feature type="transmembrane region" description="Helical" evidence="2">
    <location>
        <begin position="409"/>
        <end position="429"/>
    </location>
</feature>
<feature type="transmembrane region" description="Helical" evidence="2">
    <location>
        <begin position="437"/>
        <end position="457"/>
    </location>
</feature>
<dbReference type="EMBL" id="AE003849">
    <property type="protein sequence ID" value="AAF85483.1"/>
    <property type="molecule type" value="Genomic_DNA"/>
</dbReference>
<dbReference type="PIR" id="E82527">
    <property type="entry name" value="E82527"/>
</dbReference>
<dbReference type="SMR" id="Q9PA34"/>
<dbReference type="STRING" id="160492.XF_2686"/>
<dbReference type="KEGG" id="xfa:XF_2686"/>
<dbReference type="eggNOG" id="COG0534">
    <property type="taxonomic scope" value="Bacteria"/>
</dbReference>
<dbReference type="HOGENOM" id="CLU_012893_6_0_6"/>
<dbReference type="Proteomes" id="UP000000812">
    <property type="component" value="Chromosome"/>
</dbReference>
<dbReference type="GO" id="GO:0005886">
    <property type="term" value="C:plasma membrane"/>
    <property type="evidence" value="ECO:0007669"/>
    <property type="project" value="UniProtKB-SubCell"/>
</dbReference>
<dbReference type="GO" id="GO:0015297">
    <property type="term" value="F:antiporter activity"/>
    <property type="evidence" value="ECO:0007669"/>
    <property type="project" value="UniProtKB-KW"/>
</dbReference>
<dbReference type="GO" id="GO:0042910">
    <property type="term" value="F:xenobiotic transmembrane transporter activity"/>
    <property type="evidence" value="ECO:0007669"/>
    <property type="project" value="InterPro"/>
</dbReference>
<dbReference type="GO" id="GO:0006811">
    <property type="term" value="P:monoatomic ion transport"/>
    <property type="evidence" value="ECO:0007669"/>
    <property type="project" value="UniProtKB-KW"/>
</dbReference>
<dbReference type="CDD" id="cd13131">
    <property type="entry name" value="MATE_NorM_like"/>
    <property type="match status" value="1"/>
</dbReference>
<dbReference type="InterPro" id="IPR002528">
    <property type="entry name" value="MATE_fam"/>
</dbReference>
<dbReference type="InterPro" id="IPR050222">
    <property type="entry name" value="MATE_MdtK"/>
</dbReference>
<dbReference type="NCBIfam" id="TIGR00797">
    <property type="entry name" value="matE"/>
    <property type="match status" value="1"/>
</dbReference>
<dbReference type="PANTHER" id="PTHR43298:SF2">
    <property type="entry name" value="FMN_FAD EXPORTER YEEO-RELATED"/>
    <property type="match status" value="1"/>
</dbReference>
<dbReference type="PANTHER" id="PTHR43298">
    <property type="entry name" value="MULTIDRUG RESISTANCE PROTEIN NORM-RELATED"/>
    <property type="match status" value="1"/>
</dbReference>
<dbReference type="Pfam" id="PF01554">
    <property type="entry name" value="MatE"/>
    <property type="match status" value="2"/>
</dbReference>
<keyword id="KW-0050">Antiport</keyword>
<keyword id="KW-0997">Cell inner membrane</keyword>
<keyword id="KW-1003">Cell membrane</keyword>
<keyword id="KW-0406">Ion transport</keyword>
<keyword id="KW-0472">Membrane</keyword>
<keyword id="KW-0812">Transmembrane</keyword>
<keyword id="KW-1133">Transmembrane helix</keyword>
<keyword id="KW-0813">Transport</keyword>
<proteinExistence type="inferred from homology"/>
<protein>
    <recommendedName>
        <fullName>Probable multidrug resistance protein NorM</fullName>
    </recommendedName>
    <alternativeName>
        <fullName>Multidrug-efflux transporter</fullName>
    </alternativeName>
</protein>
<accession>Q9PA34</accession>
<reference key="1">
    <citation type="journal article" date="2000" name="Nature">
        <title>The genome sequence of the plant pathogen Xylella fastidiosa.</title>
        <authorList>
            <person name="Simpson A.J.G."/>
            <person name="Reinach F.C."/>
            <person name="Arruda P."/>
            <person name="Abreu F.A."/>
            <person name="Acencio M."/>
            <person name="Alvarenga R."/>
            <person name="Alves L.M.C."/>
            <person name="Araya J.E."/>
            <person name="Baia G.S."/>
            <person name="Baptista C.S."/>
            <person name="Barros M.H."/>
            <person name="Bonaccorsi E.D."/>
            <person name="Bordin S."/>
            <person name="Bove J.M."/>
            <person name="Briones M.R.S."/>
            <person name="Bueno M.R.P."/>
            <person name="Camargo A.A."/>
            <person name="Camargo L.E.A."/>
            <person name="Carraro D.M."/>
            <person name="Carrer H."/>
            <person name="Colauto N.B."/>
            <person name="Colombo C."/>
            <person name="Costa F.F."/>
            <person name="Costa M.C.R."/>
            <person name="Costa-Neto C.M."/>
            <person name="Coutinho L.L."/>
            <person name="Cristofani M."/>
            <person name="Dias-Neto E."/>
            <person name="Docena C."/>
            <person name="El-Dorry H."/>
            <person name="Facincani A.P."/>
            <person name="Ferreira A.J.S."/>
            <person name="Ferreira V.C.A."/>
            <person name="Ferro J.A."/>
            <person name="Fraga J.S."/>
            <person name="Franca S.C."/>
            <person name="Franco M.C."/>
            <person name="Frohme M."/>
            <person name="Furlan L.R."/>
            <person name="Garnier M."/>
            <person name="Goldman G.H."/>
            <person name="Goldman M.H.S."/>
            <person name="Gomes S.L."/>
            <person name="Gruber A."/>
            <person name="Ho P.L."/>
            <person name="Hoheisel J.D."/>
            <person name="Junqueira M.L."/>
            <person name="Kemper E.L."/>
            <person name="Kitajima J.P."/>
            <person name="Krieger J.E."/>
            <person name="Kuramae E.E."/>
            <person name="Laigret F."/>
            <person name="Lambais M.R."/>
            <person name="Leite L.C.C."/>
            <person name="Lemos E.G.M."/>
            <person name="Lemos M.V.F."/>
            <person name="Lopes S.A."/>
            <person name="Lopes C.R."/>
            <person name="Machado J.A."/>
            <person name="Machado M.A."/>
            <person name="Madeira A.M.B.N."/>
            <person name="Madeira H.M.F."/>
            <person name="Marino C.L."/>
            <person name="Marques M.V."/>
            <person name="Martins E.A.L."/>
            <person name="Martins E.M.F."/>
            <person name="Matsukuma A.Y."/>
            <person name="Menck C.F.M."/>
            <person name="Miracca E.C."/>
            <person name="Miyaki C.Y."/>
            <person name="Monteiro-Vitorello C.B."/>
            <person name="Moon D.H."/>
            <person name="Nagai M.A."/>
            <person name="Nascimento A.L.T.O."/>
            <person name="Netto L.E.S."/>
            <person name="Nhani A. Jr."/>
            <person name="Nobrega F.G."/>
            <person name="Nunes L.R."/>
            <person name="Oliveira M.A."/>
            <person name="de Oliveira M.C."/>
            <person name="de Oliveira R.C."/>
            <person name="Palmieri D.A."/>
            <person name="Paris A."/>
            <person name="Peixoto B.R."/>
            <person name="Pereira G.A.G."/>
            <person name="Pereira H.A. Jr."/>
            <person name="Pesquero J.B."/>
            <person name="Quaggio R.B."/>
            <person name="Roberto P.G."/>
            <person name="Rodrigues V."/>
            <person name="de Rosa A.J.M."/>
            <person name="de Rosa V.E. Jr."/>
            <person name="de Sa R.G."/>
            <person name="Santelli R.V."/>
            <person name="Sawasaki H.E."/>
            <person name="da Silva A.C.R."/>
            <person name="da Silva A.M."/>
            <person name="da Silva F.R."/>
            <person name="Silva W.A. Jr."/>
            <person name="da Silveira J.F."/>
            <person name="Silvestri M.L.Z."/>
            <person name="Siqueira W.J."/>
            <person name="de Souza A.A."/>
            <person name="de Souza A.P."/>
            <person name="Terenzi M.F."/>
            <person name="Truffi D."/>
            <person name="Tsai S.M."/>
            <person name="Tsuhako M.H."/>
            <person name="Vallada H."/>
            <person name="Van Sluys M.A."/>
            <person name="Verjovski-Almeida S."/>
            <person name="Vettore A.L."/>
            <person name="Zago M.A."/>
            <person name="Zatz M."/>
            <person name="Meidanis J."/>
            <person name="Setubal J.C."/>
        </authorList>
    </citation>
    <scope>NUCLEOTIDE SEQUENCE [LARGE SCALE GENOMIC DNA]</scope>
    <source>
        <strain>9a5c</strain>
    </source>
</reference>
<sequence length="469" mass="51197">MFLPRPDFRIALFICFMAVSFVISRFGSEVRPTLLLALPLVLGHVSTGLIGFVLNVIAGHHSTVTLAASTIGTALLWLPMLVPMGTLISLTVLVSQLHGAERERDIGPLFRQALWLAMLLGLVMFTFLSVVPALLPLFGIVPDIVPGAAKFLHVVRWGSLAFPLYFCMRYFCEGMHCTFPTMLLGFGGLLVLVPLSYALTYGRFGFSEYGVEGLGIATVMVMWLQAVVFALYLWRSRRFAHLQLFAHLELPCWARIRDLLNIGLPIGISILMEGGLFIVTTLLIGRFGTDEIAAHQIALSVAQLCFMIPMGVAEATTVRIGHAVGRCDLLVMRRVAWAGYAIVIGTQTLSASVLLLGYDVIVAAYTDDLVVASLASKLLLFAAIFQFPDGLQMLSSGVLRGMKDTRVPMLLAMISYWGLGMPLGLGLGFALEWNSRGMWIGLIIGLTAAAVLLGWRFRVVSERMFAGIP</sequence>
<comment type="function">
    <text evidence="1">Multidrug efflux pump.</text>
</comment>
<comment type="subcellular location">
    <subcellularLocation>
        <location evidence="1">Cell inner membrane</location>
        <topology evidence="1">Multi-pass membrane protein</topology>
    </subcellularLocation>
</comment>
<comment type="similarity">
    <text evidence="3">Belongs to the multi antimicrobial extrusion (MATE) (TC 2.A.66.1) family.</text>
</comment>
<organism>
    <name type="scientific">Xylella fastidiosa (strain 9a5c)</name>
    <dbReference type="NCBI Taxonomy" id="160492"/>
    <lineage>
        <taxon>Bacteria</taxon>
        <taxon>Pseudomonadati</taxon>
        <taxon>Pseudomonadota</taxon>
        <taxon>Gammaproteobacteria</taxon>
        <taxon>Lysobacterales</taxon>
        <taxon>Lysobacteraceae</taxon>
        <taxon>Xylella</taxon>
    </lineage>
</organism>
<evidence type="ECO:0000250" key="1"/>
<evidence type="ECO:0000255" key="2"/>
<evidence type="ECO:0000305" key="3"/>